<gene>
    <name type="primary">Erich2</name>
</gene>
<organism>
    <name type="scientific">Rattus norvegicus</name>
    <name type="common">Rat</name>
    <dbReference type="NCBI Taxonomy" id="10116"/>
    <lineage>
        <taxon>Eukaryota</taxon>
        <taxon>Metazoa</taxon>
        <taxon>Chordata</taxon>
        <taxon>Craniata</taxon>
        <taxon>Vertebrata</taxon>
        <taxon>Euteleostomi</taxon>
        <taxon>Mammalia</taxon>
        <taxon>Eutheria</taxon>
        <taxon>Euarchontoglires</taxon>
        <taxon>Glires</taxon>
        <taxon>Rodentia</taxon>
        <taxon>Myomorpha</taxon>
        <taxon>Muroidea</taxon>
        <taxon>Muridae</taxon>
        <taxon>Murinae</taxon>
        <taxon>Rattus</taxon>
    </lineage>
</organism>
<proteinExistence type="evidence at transcript level"/>
<name>ERIC2_RAT</name>
<accession>Q66H03</accession>
<evidence type="ECO:0000256" key="1">
    <source>
        <dbReference type="SAM" id="MobiDB-lite"/>
    </source>
</evidence>
<protein>
    <recommendedName>
        <fullName>Glutamate-rich protein 2</fullName>
    </recommendedName>
</protein>
<dbReference type="EMBL" id="BC082109">
    <property type="protein sequence ID" value="AAH82109.1"/>
    <property type="molecule type" value="mRNA"/>
</dbReference>
<dbReference type="RefSeq" id="NP_001019482.1">
    <property type="nucleotide sequence ID" value="NM_001024311.1"/>
</dbReference>
<dbReference type="SMR" id="Q66H03"/>
<dbReference type="STRING" id="10116.ENSRNOP00000072627"/>
<dbReference type="GlyGen" id="Q66H03">
    <property type="glycosylation" value="1 site"/>
</dbReference>
<dbReference type="iPTMnet" id="Q66H03"/>
<dbReference type="PhosphoSitePlus" id="Q66H03"/>
<dbReference type="PaxDb" id="10116-ENSRNOP00000050813"/>
<dbReference type="Ensembl" id="ENSRNOT00000077551.2">
    <property type="protein sequence ID" value="ENSRNOP00000072627.1"/>
    <property type="gene ID" value="ENSRNOG00000056087.2"/>
</dbReference>
<dbReference type="GeneID" id="499806"/>
<dbReference type="KEGG" id="rno:499806"/>
<dbReference type="UCSC" id="RGD:1563852">
    <property type="organism name" value="rat"/>
</dbReference>
<dbReference type="AGR" id="RGD:1563852"/>
<dbReference type="CTD" id="285141"/>
<dbReference type="RGD" id="1563852">
    <property type="gene designation" value="Erich2"/>
</dbReference>
<dbReference type="eggNOG" id="ENOG502S4MD">
    <property type="taxonomic scope" value="Eukaryota"/>
</dbReference>
<dbReference type="GeneTree" id="ENSGT00390000017846"/>
<dbReference type="HOGENOM" id="CLU_679654_0_0_1"/>
<dbReference type="InParanoid" id="Q66H03"/>
<dbReference type="PhylomeDB" id="Q66H03"/>
<dbReference type="TreeFam" id="TF342975"/>
<dbReference type="PRO" id="PR:Q66H03"/>
<dbReference type="Proteomes" id="UP000002494">
    <property type="component" value="Chromosome 3"/>
</dbReference>
<dbReference type="Bgee" id="ENSRNOG00000056087">
    <property type="expression patterns" value="Expressed in testis and 11 other cell types or tissues"/>
</dbReference>
<dbReference type="InterPro" id="IPR026703">
    <property type="entry name" value="ERICH2"/>
</dbReference>
<dbReference type="PANTHER" id="PTHR21520">
    <property type="entry name" value="GLUTAMATE-RICH PROTEIN 2"/>
    <property type="match status" value="1"/>
</dbReference>
<dbReference type="PANTHER" id="PTHR21520:SF2">
    <property type="entry name" value="GLUTAMATE-RICH PROTEIN 2"/>
    <property type="match status" value="1"/>
</dbReference>
<feature type="chain" id="PRO_0000346763" description="Glutamate-rich protein 2">
    <location>
        <begin position="1"/>
        <end position="433"/>
    </location>
</feature>
<feature type="region of interest" description="Disordered" evidence="1">
    <location>
        <begin position="56"/>
        <end position="86"/>
    </location>
</feature>
<feature type="region of interest" description="Disordered" evidence="1">
    <location>
        <begin position="113"/>
        <end position="161"/>
    </location>
</feature>
<feature type="region of interest" description="Disordered" evidence="1">
    <location>
        <begin position="189"/>
        <end position="273"/>
    </location>
</feature>
<feature type="region of interest" description="Disordered" evidence="1">
    <location>
        <begin position="308"/>
        <end position="344"/>
    </location>
</feature>
<feature type="region of interest" description="Disordered" evidence="1">
    <location>
        <begin position="394"/>
        <end position="433"/>
    </location>
</feature>
<feature type="compositionally biased region" description="Pro residues" evidence="1">
    <location>
        <begin position="63"/>
        <end position="85"/>
    </location>
</feature>
<feature type="compositionally biased region" description="Polar residues" evidence="1">
    <location>
        <begin position="114"/>
        <end position="127"/>
    </location>
</feature>
<feature type="compositionally biased region" description="Basic and acidic residues" evidence="1">
    <location>
        <begin position="199"/>
        <end position="214"/>
    </location>
</feature>
<feature type="compositionally biased region" description="Basic and acidic residues" evidence="1">
    <location>
        <begin position="244"/>
        <end position="258"/>
    </location>
</feature>
<feature type="compositionally biased region" description="Polar residues" evidence="1">
    <location>
        <begin position="259"/>
        <end position="273"/>
    </location>
</feature>
<feature type="compositionally biased region" description="Acidic residues" evidence="1">
    <location>
        <begin position="308"/>
        <end position="334"/>
    </location>
</feature>
<feature type="compositionally biased region" description="Acidic residues" evidence="1">
    <location>
        <begin position="397"/>
        <end position="433"/>
    </location>
</feature>
<keyword id="KW-1185">Reference proteome</keyword>
<sequence>MDTDFPVSLSPAFLKVTRVRGQACPRVCAPNLPRSVTPSTSGRWATRAARSALHVVPAAGTAPAPPPPRALRPAPGPPRSAPLAPPLRRVVQSLGSSRGSRASCCSPSCLHGDSASQARGSEPSSSAERGWPSWSGLRGNSLAGRPEGWASGTPRLSKHPQRSLVPEFCIPEIPSNYLDKTEVVKAPKSRQNGRLLLCDPKEKLMSGSNKEKPQKSSFGRRPRLSSKLCTSPTQIPGGATVFSARKETSSKKIEDKVSLKSSENRPSSRSIETNRQFDLWSSSFLKESSGEVNKDLVLAKQEKNSEYCLEDIEENLSDSTDGDGEEDSNNEDDEGPAKKETRAPLELMAEFLRAEMGRDYQLAKKLCQMILIYEPENPVAKEFFSLIEEILLKEKAQEEEEEEESDEDSSSESEVDSSEDGSEDSSDECEDGS</sequence>
<reference key="1">
    <citation type="journal article" date="2004" name="Genome Res.">
        <title>The status, quality, and expansion of the NIH full-length cDNA project: the Mammalian Gene Collection (MGC).</title>
        <authorList>
            <consortium name="The MGC Project Team"/>
        </authorList>
    </citation>
    <scope>NUCLEOTIDE SEQUENCE [LARGE SCALE MRNA]</scope>
    <source>
        <tissue>Testis</tissue>
    </source>
</reference>